<evidence type="ECO:0000255" key="1">
    <source>
        <dbReference type="HAMAP-Rule" id="MF_01014"/>
    </source>
</evidence>
<evidence type="ECO:0000305" key="2"/>
<reference key="1">
    <citation type="submission" date="2006-06" db="EMBL/GenBank/DDBJ databases">
        <title>Complete sequence of chromosome of Mycobacterium sp. MCS.</title>
        <authorList>
            <consortium name="US DOE Joint Genome Institute"/>
            <person name="Copeland A."/>
            <person name="Lucas S."/>
            <person name="Lapidus A."/>
            <person name="Barry K."/>
            <person name="Detter J.C."/>
            <person name="Glavina del Rio T."/>
            <person name="Hammon N."/>
            <person name="Israni S."/>
            <person name="Dalin E."/>
            <person name="Tice H."/>
            <person name="Pitluck S."/>
            <person name="Martinez M."/>
            <person name="Schmutz J."/>
            <person name="Larimer F."/>
            <person name="Land M."/>
            <person name="Hauser L."/>
            <person name="Kyrpides N."/>
            <person name="Kim E."/>
            <person name="Miller C.D."/>
            <person name="Hughes J.E."/>
            <person name="Anderson A.J."/>
            <person name="Sims R.C."/>
            <person name="Richardson P."/>
        </authorList>
    </citation>
    <scope>NUCLEOTIDE SEQUENCE [LARGE SCALE GENOMIC DNA]</scope>
    <source>
        <strain>MCS</strain>
    </source>
</reference>
<feature type="chain" id="PRO_0000290568" description="Phosphoribosyl isomerase A">
    <location>
        <begin position="1"/>
        <end position="248"/>
    </location>
</feature>
<feature type="active site" description="Proton acceptor" evidence="1">
    <location>
        <position position="14"/>
    </location>
</feature>
<feature type="active site" description="Proton donor" evidence="1">
    <location>
        <position position="133"/>
    </location>
</feature>
<organism>
    <name type="scientific">Mycobacterium sp. (strain MCS)</name>
    <dbReference type="NCBI Taxonomy" id="164756"/>
    <lineage>
        <taxon>Bacteria</taxon>
        <taxon>Bacillati</taxon>
        <taxon>Actinomycetota</taxon>
        <taxon>Actinomycetes</taxon>
        <taxon>Mycobacteriales</taxon>
        <taxon>Mycobacteriaceae</taxon>
        <taxon>Mycobacterium</taxon>
    </lineage>
</organism>
<name>HIS4_MYCSS</name>
<protein>
    <recommendedName>
        <fullName evidence="1">Phosphoribosyl isomerase A</fullName>
    </recommendedName>
    <alternativeName>
        <fullName evidence="1">1-(5-phosphoribosyl)-5-[(5-phosphoribosylamino)methylideneamino] imidazole-4-carboxamide isomerase</fullName>
        <ecNumber evidence="1">5.3.1.16</ecNumber>
    </alternativeName>
    <alternativeName>
        <fullName evidence="1">N-(5'-phosphoribosyl)anthranilate isomerase</fullName>
        <shortName evidence="1">PRAI</shortName>
        <ecNumber evidence="1">5.3.1.24</ecNumber>
    </alternativeName>
    <alternativeName>
        <fullName evidence="1">Phosphoribosylformimino-5-aminoimidazole carboxamide ribotide isomerase</fullName>
    </alternativeName>
</protein>
<accession>Q1B7G8</accession>
<gene>
    <name evidence="1" type="primary">priA</name>
    <name evidence="1" type="synonym">hisA</name>
    <name type="ordered locus">Mmcs_3059</name>
</gene>
<dbReference type="EC" id="5.3.1.16" evidence="1"/>
<dbReference type="EC" id="5.3.1.24" evidence="1"/>
<dbReference type="EMBL" id="CP000384">
    <property type="protein sequence ID" value="ABG09166.1"/>
    <property type="status" value="ALT_INIT"/>
    <property type="molecule type" value="Genomic_DNA"/>
</dbReference>
<dbReference type="SMR" id="Q1B7G8"/>
<dbReference type="KEGG" id="mmc:Mmcs_3059"/>
<dbReference type="HOGENOM" id="CLU_048577_1_1_11"/>
<dbReference type="BioCyc" id="MSP164756:G1G6O-3122-MONOMER"/>
<dbReference type="UniPathway" id="UPA00031">
    <property type="reaction ID" value="UER00009"/>
</dbReference>
<dbReference type="UniPathway" id="UPA00035">
    <property type="reaction ID" value="UER00042"/>
</dbReference>
<dbReference type="GO" id="GO:0005737">
    <property type="term" value="C:cytoplasm"/>
    <property type="evidence" value="ECO:0007669"/>
    <property type="project" value="UniProtKB-SubCell"/>
</dbReference>
<dbReference type="GO" id="GO:0003949">
    <property type="term" value="F:1-(5-phosphoribosyl)-5-[(5-phosphoribosylamino)methylideneamino]imidazole-4-carboxamide isomerase activity"/>
    <property type="evidence" value="ECO:0007669"/>
    <property type="project" value="UniProtKB-UniRule"/>
</dbReference>
<dbReference type="GO" id="GO:0004640">
    <property type="term" value="F:phosphoribosylanthranilate isomerase activity"/>
    <property type="evidence" value="ECO:0007669"/>
    <property type="project" value="UniProtKB-UniRule"/>
</dbReference>
<dbReference type="GO" id="GO:0000105">
    <property type="term" value="P:L-histidine biosynthetic process"/>
    <property type="evidence" value="ECO:0007669"/>
    <property type="project" value="UniProtKB-UniRule"/>
</dbReference>
<dbReference type="GO" id="GO:0000162">
    <property type="term" value="P:L-tryptophan biosynthetic process"/>
    <property type="evidence" value="ECO:0007669"/>
    <property type="project" value="UniProtKB-UniRule"/>
</dbReference>
<dbReference type="CDD" id="cd04732">
    <property type="entry name" value="HisA"/>
    <property type="match status" value="1"/>
</dbReference>
<dbReference type="FunFam" id="3.20.20.70:FF:000009">
    <property type="entry name" value="1-(5-phosphoribosyl)-5-[(5-phosphoribosylamino)methylideneamino] imidazole-4-carboxamide isomerase"/>
    <property type="match status" value="1"/>
</dbReference>
<dbReference type="Gene3D" id="3.20.20.70">
    <property type="entry name" value="Aldolase class I"/>
    <property type="match status" value="1"/>
</dbReference>
<dbReference type="HAMAP" id="MF_01014">
    <property type="entry name" value="HisA"/>
    <property type="match status" value="1"/>
</dbReference>
<dbReference type="InterPro" id="IPR013785">
    <property type="entry name" value="Aldolase_TIM"/>
</dbReference>
<dbReference type="InterPro" id="IPR006062">
    <property type="entry name" value="His_biosynth"/>
</dbReference>
<dbReference type="InterPro" id="IPR010188">
    <property type="entry name" value="HisA/PriA_Actinobacteria"/>
</dbReference>
<dbReference type="InterPro" id="IPR044524">
    <property type="entry name" value="Isoase_HisA-like"/>
</dbReference>
<dbReference type="InterPro" id="IPR023016">
    <property type="entry name" value="Isoase_HisA-like_bact"/>
</dbReference>
<dbReference type="InterPro" id="IPR011060">
    <property type="entry name" value="RibuloseP-bd_barrel"/>
</dbReference>
<dbReference type="NCBIfam" id="TIGR01919">
    <property type="entry name" value="hisA-trpF"/>
    <property type="match status" value="1"/>
</dbReference>
<dbReference type="PANTHER" id="PTHR43090">
    <property type="entry name" value="1-(5-PHOSPHORIBOSYL)-5-[(5-PHOSPHORIBOSYLAMINO)METHYLIDENEAMINO] IMIDAZOLE-4-CARBOXAMIDE ISOMERASE"/>
    <property type="match status" value="1"/>
</dbReference>
<dbReference type="PANTHER" id="PTHR43090:SF2">
    <property type="entry name" value="1-(5-PHOSPHORIBOSYL)-5-[(5-PHOSPHORIBOSYLAMINO)METHYLIDENEAMINO] IMIDAZOLE-4-CARBOXAMIDE ISOMERASE"/>
    <property type="match status" value="1"/>
</dbReference>
<dbReference type="Pfam" id="PF00977">
    <property type="entry name" value="His_biosynth"/>
    <property type="match status" value="1"/>
</dbReference>
<dbReference type="SUPFAM" id="SSF51366">
    <property type="entry name" value="Ribulose-phoshate binding barrel"/>
    <property type="match status" value="1"/>
</dbReference>
<proteinExistence type="inferred from homology"/>
<comment type="function">
    <text evidence="1">Involved in both the histidine and tryptophan biosynthetic pathways.</text>
</comment>
<comment type="catalytic activity">
    <reaction evidence="1">
        <text>1-(5-phospho-beta-D-ribosyl)-5-[(5-phospho-beta-D-ribosylamino)methylideneamino]imidazole-4-carboxamide = 5-[(5-phospho-1-deoxy-D-ribulos-1-ylimino)methylamino]-1-(5-phospho-beta-D-ribosyl)imidazole-4-carboxamide</text>
        <dbReference type="Rhea" id="RHEA:15469"/>
        <dbReference type="ChEBI" id="CHEBI:58435"/>
        <dbReference type="ChEBI" id="CHEBI:58525"/>
        <dbReference type="EC" id="5.3.1.16"/>
    </reaction>
</comment>
<comment type="catalytic activity">
    <reaction evidence="1">
        <text>N-(5-phospho-beta-D-ribosyl)anthranilate = 1-(2-carboxyphenylamino)-1-deoxy-D-ribulose 5-phosphate</text>
        <dbReference type="Rhea" id="RHEA:21540"/>
        <dbReference type="ChEBI" id="CHEBI:18277"/>
        <dbReference type="ChEBI" id="CHEBI:58613"/>
        <dbReference type="EC" id="5.3.1.24"/>
    </reaction>
</comment>
<comment type="pathway">
    <text evidence="1">Amino-acid biosynthesis; L-histidine biosynthesis; L-histidine from 5-phospho-alpha-D-ribose 1-diphosphate: step 4/9.</text>
</comment>
<comment type="pathway">
    <text evidence="1">Amino-acid biosynthesis; L-tryptophan biosynthesis; L-tryptophan from chorismate: step 3/5.</text>
</comment>
<comment type="subcellular location">
    <subcellularLocation>
        <location evidence="1">Cytoplasm</location>
    </subcellularLocation>
</comment>
<comment type="similarity">
    <text evidence="1">Belongs to the HisA/HisF family.</text>
</comment>
<comment type="sequence caution" evidence="2">
    <conflict type="erroneous initiation">
        <sequence resource="EMBL-CDS" id="ABG09166"/>
    </conflict>
</comment>
<keyword id="KW-0028">Amino-acid biosynthesis</keyword>
<keyword id="KW-0057">Aromatic amino acid biosynthesis</keyword>
<keyword id="KW-0963">Cytoplasm</keyword>
<keyword id="KW-0368">Histidine biosynthesis</keyword>
<keyword id="KW-0413">Isomerase</keyword>
<keyword id="KW-0822">Tryptophan biosynthesis</keyword>
<sequence length="248" mass="26204">MSEKRPLILLPAVDVVEGRAVRLVQGKAGSETEYGSALDAALGWQRDGAEWIHLVDLDAAFGRGSNRELLADVVGRLDVAVELSGGIRDDESLEAALATGCARVNIGTAALENPQWCAKVVAEFGDKVAVGLDVKIVDDQHRLRGRGWETDGGDLWEVLDRLDSEGCSRYVVTDVTKDGTLQGPNLDLLGRVADRTDAPVIASGGVSSLDDLRAIATLTDRGVEGAIVGKALYAGRFTLPEALAAMGQ</sequence>